<name>SYWC_SCHPO</name>
<proteinExistence type="evidence at protein level"/>
<dbReference type="EC" id="6.1.1.2"/>
<dbReference type="EMBL" id="CU329670">
    <property type="protein sequence ID" value="CAA90500.1"/>
    <property type="molecule type" value="Genomic_DNA"/>
</dbReference>
<dbReference type="PIR" id="S58157">
    <property type="entry name" value="S58157"/>
</dbReference>
<dbReference type="RefSeq" id="NP_592983.1">
    <property type="nucleotide sequence ID" value="NM_001018383.2"/>
</dbReference>
<dbReference type="SMR" id="Q09692"/>
<dbReference type="BioGRID" id="278332">
    <property type="interactions" value="1"/>
</dbReference>
<dbReference type="FunCoup" id="Q09692">
    <property type="interactions" value="1045"/>
</dbReference>
<dbReference type="STRING" id="284812.Q09692"/>
<dbReference type="iPTMnet" id="Q09692"/>
<dbReference type="PaxDb" id="4896-SPAC2F7.13c.1"/>
<dbReference type="EnsemblFungi" id="SPAC2F7.13c.1">
    <property type="protein sequence ID" value="SPAC2F7.13c.1:pep"/>
    <property type="gene ID" value="SPAC2F7.13c"/>
</dbReference>
<dbReference type="GeneID" id="2541841"/>
<dbReference type="KEGG" id="spo:2541841"/>
<dbReference type="PomBase" id="SPAC2F7.13c">
    <property type="gene designation" value="wrs1"/>
</dbReference>
<dbReference type="VEuPathDB" id="FungiDB:SPAC2F7.13c"/>
<dbReference type="eggNOG" id="KOG2145">
    <property type="taxonomic scope" value="Eukaryota"/>
</dbReference>
<dbReference type="HOGENOM" id="CLU_032621_0_1_1"/>
<dbReference type="InParanoid" id="Q09692"/>
<dbReference type="OMA" id="SIYHRFM"/>
<dbReference type="PhylomeDB" id="Q09692"/>
<dbReference type="PRO" id="PR:Q09692"/>
<dbReference type="Proteomes" id="UP000002485">
    <property type="component" value="Chromosome I"/>
</dbReference>
<dbReference type="GO" id="GO:0005737">
    <property type="term" value="C:cytoplasm"/>
    <property type="evidence" value="ECO:0000318"/>
    <property type="project" value="GO_Central"/>
</dbReference>
<dbReference type="GO" id="GO:0005829">
    <property type="term" value="C:cytosol"/>
    <property type="evidence" value="ECO:0007005"/>
    <property type="project" value="PomBase"/>
</dbReference>
<dbReference type="GO" id="GO:0005524">
    <property type="term" value="F:ATP binding"/>
    <property type="evidence" value="ECO:0007669"/>
    <property type="project" value="UniProtKB-KW"/>
</dbReference>
<dbReference type="GO" id="GO:0004830">
    <property type="term" value="F:tryptophan-tRNA ligase activity"/>
    <property type="evidence" value="ECO:0000318"/>
    <property type="project" value="GO_Central"/>
</dbReference>
<dbReference type="GO" id="GO:0002181">
    <property type="term" value="P:cytoplasmic translation"/>
    <property type="evidence" value="ECO:0000303"/>
    <property type="project" value="PomBase"/>
</dbReference>
<dbReference type="GO" id="GO:0006436">
    <property type="term" value="P:tryptophanyl-tRNA aminoacylation"/>
    <property type="evidence" value="ECO:0000318"/>
    <property type="project" value="GO_Central"/>
</dbReference>
<dbReference type="CDD" id="cd00806">
    <property type="entry name" value="TrpRS_core"/>
    <property type="match status" value="1"/>
</dbReference>
<dbReference type="FunFam" id="1.10.240.10:FF:000003">
    <property type="entry name" value="Tryptophan--tRNA ligase, cytoplasmic"/>
    <property type="match status" value="1"/>
</dbReference>
<dbReference type="FunFam" id="3.40.50.620:FF:000033">
    <property type="entry name" value="tryptophan--tRNA ligase, cytoplasmic"/>
    <property type="match status" value="1"/>
</dbReference>
<dbReference type="Gene3D" id="3.40.50.620">
    <property type="entry name" value="HUPs"/>
    <property type="match status" value="1"/>
</dbReference>
<dbReference type="Gene3D" id="1.10.240.10">
    <property type="entry name" value="Tyrosyl-Transfer RNA Synthetase"/>
    <property type="match status" value="1"/>
</dbReference>
<dbReference type="InterPro" id="IPR001412">
    <property type="entry name" value="aa-tRNA-synth_I_CS"/>
</dbReference>
<dbReference type="InterPro" id="IPR002305">
    <property type="entry name" value="aa-tRNA-synth_Ic"/>
</dbReference>
<dbReference type="InterPro" id="IPR014729">
    <property type="entry name" value="Rossmann-like_a/b/a_fold"/>
</dbReference>
<dbReference type="InterPro" id="IPR002306">
    <property type="entry name" value="Trp-tRNA-ligase"/>
</dbReference>
<dbReference type="NCBIfam" id="TIGR00233">
    <property type="entry name" value="trpS"/>
    <property type="match status" value="1"/>
</dbReference>
<dbReference type="PANTHER" id="PTHR10055:SF1">
    <property type="entry name" value="TRYPTOPHAN--TRNA LIGASE, CYTOPLASMIC"/>
    <property type="match status" value="1"/>
</dbReference>
<dbReference type="PANTHER" id="PTHR10055">
    <property type="entry name" value="TRYPTOPHANYL-TRNA SYNTHETASE"/>
    <property type="match status" value="1"/>
</dbReference>
<dbReference type="Pfam" id="PF00579">
    <property type="entry name" value="tRNA-synt_1b"/>
    <property type="match status" value="1"/>
</dbReference>
<dbReference type="PRINTS" id="PR01039">
    <property type="entry name" value="TRNASYNTHTRP"/>
</dbReference>
<dbReference type="SUPFAM" id="SSF52374">
    <property type="entry name" value="Nucleotidylyl transferase"/>
    <property type="match status" value="1"/>
</dbReference>
<dbReference type="PROSITE" id="PS00178">
    <property type="entry name" value="AA_TRNA_LIGASE_I"/>
    <property type="match status" value="1"/>
</dbReference>
<gene>
    <name type="primary">wrs1</name>
    <name type="ORF">SPAC2F7.13c</name>
</gene>
<feature type="chain" id="PRO_0000136743" description="Tryptophan--tRNA ligase, cytoplasmic">
    <location>
        <begin position="1"/>
        <end position="395"/>
    </location>
</feature>
<feature type="short sequence motif" description="'HIGH' region">
    <location>
        <begin position="91"/>
        <end position="100"/>
    </location>
</feature>
<feature type="short sequence motif" description="'KMSKS' region">
    <location>
        <begin position="275"/>
        <end position="279"/>
    </location>
</feature>
<feature type="modified residue" description="Phosphothreonine" evidence="2">
    <location>
        <position position="288"/>
    </location>
</feature>
<feature type="modified residue" description="Phosphothreonine" evidence="2">
    <location>
        <position position="290"/>
    </location>
</feature>
<keyword id="KW-0030">Aminoacyl-tRNA synthetase</keyword>
<keyword id="KW-0067">ATP-binding</keyword>
<keyword id="KW-0963">Cytoplasm</keyword>
<keyword id="KW-0436">Ligase</keyword>
<keyword id="KW-0547">Nucleotide-binding</keyword>
<keyword id="KW-0597">Phosphoprotein</keyword>
<keyword id="KW-0648">Protein biosynthesis</keyword>
<keyword id="KW-1185">Reference proteome</keyword>
<organism>
    <name type="scientific">Schizosaccharomyces pombe (strain 972 / ATCC 24843)</name>
    <name type="common">Fission yeast</name>
    <dbReference type="NCBI Taxonomy" id="284812"/>
    <lineage>
        <taxon>Eukaryota</taxon>
        <taxon>Fungi</taxon>
        <taxon>Dikarya</taxon>
        <taxon>Ascomycota</taxon>
        <taxon>Taphrinomycotina</taxon>
        <taxon>Schizosaccharomycetes</taxon>
        <taxon>Schizosaccharomycetales</taxon>
        <taxon>Schizosaccharomycetaceae</taxon>
        <taxon>Schizosaccharomyces</taxon>
    </lineage>
</organism>
<sequence length="395" mass="44910">MSVEEQIVTPWDVKGSIVDGEEKGIDYERLIVQFGTRKITPEQLERFEKLTGKKPHLLLRRGAFFSHRDFDMILDRYEQKKPFYLYTGRGPSSDSMHLGHMIPFMFCKWLQDVFQVPLVIQLTDDEKFLFKQGVSLEDCQRFARENAKDIIAVGFDPKKTFIFMNSTYVGGAFYQNVVRIAKCITANQSKACFGFTDSDSIGKIHFASIQAAPSFSSSFPHIFNGAKDIPCLIPCAIDQDPYFRLTRDVSGRLKFKKPALLHSRFFPALQGPQSKMSASKDSSAIFMTDTPNKIKNKINRHAFSGGGATIEIHREKGGNPDVDVAYQYLSFFLDDDEKLKQLYNTYKAGTLSTGEMKGECIKLLQQFVSDFQAARSKVDEATLDMFMDGSRKLEW</sequence>
<protein>
    <recommendedName>
        <fullName>Tryptophan--tRNA ligase, cytoplasmic</fullName>
        <ecNumber>6.1.1.2</ecNumber>
    </recommendedName>
    <alternativeName>
        <fullName>Tryptophanyl-tRNA synthetase</fullName>
        <shortName>TrpRS</shortName>
    </alternativeName>
</protein>
<accession>Q09692</accession>
<comment type="catalytic activity">
    <reaction>
        <text>tRNA(Trp) + L-tryptophan + ATP = L-tryptophyl-tRNA(Trp) + AMP + diphosphate + H(+)</text>
        <dbReference type="Rhea" id="RHEA:24080"/>
        <dbReference type="Rhea" id="RHEA-COMP:9671"/>
        <dbReference type="Rhea" id="RHEA-COMP:9705"/>
        <dbReference type="ChEBI" id="CHEBI:15378"/>
        <dbReference type="ChEBI" id="CHEBI:30616"/>
        <dbReference type="ChEBI" id="CHEBI:33019"/>
        <dbReference type="ChEBI" id="CHEBI:57912"/>
        <dbReference type="ChEBI" id="CHEBI:78442"/>
        <dbReference type="ChEBI" id="CHEBI:78535"/>
        <dbReference type="ChEBI" id="CHEBI:456215"/>
        <dbReference type="EC" id="6.1.1.2"/>
    </reaction>
</comment>
<comment type="subcellular location">
    <subcellularLocation>
        <location evidence="1">Cytoplasm</location>
    </subcellularLocation>
</comment>
<comment type="similarity">
    <text evidence="3">Belongs to the class-I aminoacyl-tRNA synthetase family.</text>
</comment>
<reference key="1">
    <citation type="journal article" date="2002" name="Nature">
        <title>The genome sequence of Schizosaccharomyces pombe.</title>
        <authorList>
            <person name="Wood V."/>
            <person name="Gwilliam R."/>
            <person name="Rajandream M.A."/>
            <person name="Lyne M.H."/>
            <person name="Lyne R."/>
            <person name="Stewart A."/>
            <person name="Sgouros J.G."/>
            <person name="Peat N."/>
            <person name="Hayles J."/>
            <person name="Baker S.G."/>
            <person name="Basham D."/>
            <person name="Bowman S."/>
            <person name="Brooks K."/>
            <person name="Brown D."/>
            <person name="Brown S."/>
            <person name="Chillingworth T."/>
            <person name="Churcher C.M."/>
            <person name="Collins M."/>
            <person name="Connor R."/>
            <person name="Cronin A."/>
            <person name="Davis P."/>
            <person name="Feltwell T."/>
            <person name="Fraser A."/>
            <person name="Gentles S."/>
            <person name="Goble A."/>
            <person name="Hamlin N."/>
            <person name="Harris D.E."/>
            <person name="Hidalgo J."/>
            <person name="Hodgson G."/>
            <person name="Holroyd S."/>
            <person name="Hornsby T."/>
            <person name="Howarth S."/>
            <person name="Huckle E.J."/>
            <person name="Hunt S."/>
            <person name="Jagels K."/>
            <person name="James K.D."/>
            <person name="Jones L."/>
            <person name="Jones M."/>
            <person name="Leather S."/>
            <person name="McDonald S."/>
            <person name="McLean J."/>
            <person name="Mooney P."/>
            <person name="Moule S."/>
            <person name="Mungall K.L."/>
            <person name="Murphy L.D."/>
            <person name="Niblett D."/>
            <person name="Odell C."/>
            <person name="Oliver K."/>
            <person name="O'Neil S."/>
            <person name="Pearson D."/>
            <person name="Quail M.A."/>
            <person name="Rabbinowitsch E."/>
            <person name="Rutherford K.M."/>
            <person name="Rutter S."/>
            <person name="Saunders D."/>
            <person name="Seeger K."/>
            <person name="Sharp S."/>
            <person name="Skelton J."/>
            <person name="Simmonds M.N."/>
            <person name="Squares R."/>
            <person name="Squares S."/>
            <person name="Stevens K."/>
            <person name="Taylor K."/>
            <person name="Taylor R.G."/>
            <person name="Tivey A."/>
            <person name="Walsh S.V."/>
            <person name="Warren T."/>
            <person name="Whitehead S."/>
            <person name="Woodward J.R."/>
            <person name="Volckaert G."/>
            <person name="Aert R."/>
            <person name="Robben J."/>
            <person name="Grymonprez B."/>
            <person name="Weltjens I."/>
            <person name="Vanstreels E."/>
            <person name="Rieger M."/>
            <person name="Schaefer M."/>
            <person name="Mueller-Auer S."/>
            <person name="Gabel C."/>
            <person name="Fuchs M."/>
            <person name="Duesterhoeft A."/>
            <person name="Fritzc C."/>
            <person name="Holzer E."/>
            <person name="Moestl D."/>
            <person name="Hilbert H."/>
            <person name="Borzym K."/>
            <person name="Langer I."/>
            <person name="Beck A."/>
            <person name="Lehrach H."/>
            <person name="Reinhardt R."/>
            <person name="Pohl T.M."/>
            <person name="Eger P."/>
            <person name="Zimmermann W."/>
            <person name="Wedler H."/>
            <person name="Wambutt R."/>
            <person name="Purnelle B."/>
            <person name="Goffeau A."/>
            <person name="Cadieu E."/>
            <person name="Dreano S."/>
            <person name="Gloux S."/>
            <person name="Lelaure V."/>
            <person name="Mottier S."/>
            <person name="Galibert F."/>
            <person name="Aves S.J."/>
            <person name="Xiang Z."/>
            <person name="Hunt C."/>
            <person name="Moore K."/>
            <person name="Hurst S.M."/>
            <person name="Lucas M."/>
            <person name="Rochet M."/>
            <person name="Gaillardin C."/>
            <person name="Tallada V.A."/>
            <person name="Garzon A."/>
            <person name="Thode G."/>
            <person name="Daga R.R."/>
            <person name="Cruzado L."/>
            <person name="Jimenez J."/>
            <person name="Sanchez M."/>
            <person name="del Rey F."/>
            <person name="Benito J."/>
            <person name="Dominguez A."/>
            <person name="Revuelta J.L."/>
            <person name="Moreno S."/>
            <person name="Armstrong J."/>
            <person name="Forsburg S.L."/>
            <person name="Cerutti L."/>
            <person name="Lowe T."/>
            <person name="McCombie W.R."/>
            <person name="Paulsen I."/>
            <person name="Potashkin J."/>
            <person name="Shpakovski G.V."/>
            <person name="Ussery D."/>
            <person name="Barrell B.G."/>
            <person name="Nurse P."/>
        </authorList>
    </citation>
    <scope>NUCLEOTIDE SEQUENCE [LARGE SCALE GENOMIC DNA]</scope>
    <source>
        <strain>972 / ATCC 24843</strain>
    </source>
</reference>
<reference key="2">
    <citation type="journal article" date="2008" name="J. Proteome Res.">
        <title>Phosphoproteome analysis of fission yeast.</title>
        <authorList>
            <person name="Wilson-Grady J.T."/>
            <person name="Villen J."/>
            <person name="Gygi S.P."/>
        </authorList>
    </citation>
    <scope>PHOSPHORYLATION [LARGE SCALE ANALYSIS] AT THR-288 AND THR-290</scope>
    <scope>IDENTIFICATION BY MASS SPECTROMETRY</scope>
</reference>
<evidence type="ECO:0000250" key="1"/>
<evidence type="ECO:0000269" key="2">
    <source>
    </source>
</evidence>
<evidence type="ECO:0000305" key="3"/>